<reference key="1">
    <citation type="journal article" date="2008" name="J. Bacteriol.">
        <title>The complete genome sequence of Escherichia coli DH10B: insights into the biology of a laboratory workhorse.</title>
        <authorList>
            <person name="Durfee T."/>
            <person name="Nelson R."/>
            <person name="Baldwin S."/>
            <person name="Plunkett G. III"/>
            <person name="Burland V."/>
            <person name="Mau B."/>
            <person name="Petrosino J.F."/>
            <person name="Qin X."/>
            <person name="Muzny D.M."/>
            <person name="Ayele M."/>
            <person name="Gibbs R.A."/>
            <person name="Csorgo B."/>
            <person name="Posfai G."/>
            <person name="Weinstock G.M."/>
            <person name="Blattner F.R."/>
        </authorList>
    </citation>
    <scope>NUCLEOTIDE SEQUENCE [LARGE SCALE GENOMIC DNA]</scope>
    <source>
        <strain>K12 / DH10B</strain>
    </source>
</reference>
<name>GPPA_ECODH</name>
<proteinExistence type="inferred from homology"/>
<feature type="chain" id="PRO_1000146868" description="Guanosine-5'-triphosphate,3'-diphosphate pyrophosphatase">
    <location>
        <begin position="1"/>
        <end position="494"/>
    </location>
</feature>
<organism>
    <name type="scientific">Escherichia coli (strain K12 / DH10B)</name>
    <dbReference type="NCBI Taxonomy" id="316385"/>
    <lineage>
        <taxon>Bacteria</taxon>
        <taxon>Pseudomonadati</taxon>
        <taxon>Pseudomonadota</taxon>
        <taxon>Gammaproteobacteria</taxon>
        <taxon>Enterobacterales</taxon>
        <taxon>Enterobacteriaceae</taxon>
        <taxon>Escherichia</taxon>
    </lineage>
</organism>
<gene>
    <name evidence="1" type="primary">gppA</name>
    <name type="ordered locus">ECDH10B_3968</name>
</gene>
<sequence>MGSTSSLYAAIDLGSNSFHMLVVREVAGSIQTLTRIKRKVRLAAGLNSENALSNEAMERGWQCLRLFAERLQDIPPSQIRVVATATLRLAVNAGDFIAKAQEILGCPVQVISGEEEARLIYQGVAHTTGGADQRLVVDIGGASTELVTGTGAQTTSLFSLSMGCVTWLERYFADRNLGQENFDAAEKAAREVLRPVADELRYHGWKVCVGASGTVQALQEIMMAQGMDERITLEKLQQLKQRAIHCGRLEELEIDGLTLERALVFPSGLAILIAIFTELNIQCMTLAGGALREGLVYGMLHLAVEQDIRSRTLRNIQRRFMIDIDQAQRVAKVAANFFDQVENEWHLEAISRDLLISACQLHEIGLSVDFKQAPQHAAYLVRNLDLPGFTPAQKKLLATLLLNQTNPVDLSSLHQQNAVPPRVAEQLCRLLRLAIIFASRRRDDLVPEMTLQANHELLTLTLPQGWLTQHPLGKEIIAQESQWQSYVHWPLEVH</sequence>
<dbReference type="EC" id="3.6.1.40" evidence="1"/>
<dbReference type="EMBL" id="CP000948">
    <property type="protein sequence ID" value="ACB04808.1"/>
    <property type="molecule type" value="Genomic_DNA"/>
</dbReference>
<dbReference type="RefSeq" id="WP_001295254.1">
    <property type="nucleotide sequence ID" value="NC_010473.1"/>
</dbReference>
<dbReference type="SMR" id="B1X9Z3"/>
<dbReference type="GeneID" id="75174011"/>
<dbReference type="KEGG" id="ecd:ECDH10B_3968"/>
<dbReference type="HOGENOM" id="CLU_025908_4_0_6"/>
<dbReference type="UniPathway" id="UPA00908">
    <property type="reaction ID" value="UER00885"/>
</dbReference>
<dbReference type="GO" id="GO:0008894">
    <property type="term" value="F:guanosine-5'-triphosphate,3'-diphosphate diphosphatase activity"/>
    <property type="evidence" value="ECO:0007669"/>
    <property type="project" value="UniProtKB-UniRule"/>
</dbReference>
<dbReference type="GO" id="GO:0015974">
    <property type="term" value="P:guanosine pentaphosphate catabolic process"/>
    <property type="evidence" value="ECO:0007669"/>
    <property type="project" value="InterPro"/>
</dbReference>
<dbReference type="GO" id="GO:0015970">
    <property type="term" value="P:guanosine tetraphosphate biosynthetic process"/>
    <property type="evidence" value="ECO:0007669"/>
    <property type="project" value="UniProtKB-UniRule"/>
</dbReference>
<dbReference type="GO" id="GO:0015949">
    <property type="term" value="P:nucleobase-containing small molecule interconversion"/>
    <property type="evidence" value="ECO:0007669"/>
    <property type="project" value="TreeGrafter"/>
</dbReference>
<dbReference type="CDD" id="cd24117">
    <property type="entry name" value="ASKHA_NBD_EcGppA-like"/>
    <property type="match status" value="1"/>
</dbReference>
<dbReference type="FunFam" id="1.10.3210.10:FF:000004">
    <property type="entry name" value="Guanosine-5'-triphosphate,3'-diphosphate pyrophosphatase"/>
    <property type="match status" value="1"/>
</dbReference>
<dbReference type="FunFam" id="3.30.420.150:FF:000001">
    <property type="entry name" value="Guanosine-5'-triphosphate,3'-diphosphate pyrophosphatase"/>
    <property type="match status" value="1"/>
</dbReference>
<dbReference type="FunFam" id="3.30.420.40:FF:000023">
    <property type="entry name" value="Guanosine-5'-triphosphate,3'-diphosphate pyrophosphatase"/>
    <property type="match status" value="1"/>
</dbReference>
<dbReference type="Gene3D" id="3.30.420.40">
    <property type="match status" value="1"/>
</dbReference>
<dbReference type="Gene3D" id="3.30.420.150">
    <property type="entry name" value="Exopolyphosphatase. Domain 2"/>
    <property type="match status" value="1"/>
</dbReference>
<dbReference type="Gene3D" id="1.10.3210.10">
    <property type="entry name" value="Hypothetical protein af1432"/>
    <property type="match status" value="1"/>
</dbReference>
<dbReference type="HAMAP" id="MF_01550">
    <property type="entry name" value="GppA"/>
    <property type="match status" value="1"/>
</dbReference>
<dbReference type="InterPro" id="IPR043129">
    <property type="entry name" value="ATPase_NBD"/>
</dbReference>
<dbReference type="InterPro" id="IPR050273">
    <property type="entry name" value="GppA/Ppx_hydrolase"/>
</dbReference>
<dbReference type="InterPro" id="IPR023709">
    <property type="entry name" value="Guo-5TP_3DP_PyrP"/>
</dbReference>
<dbReference type="InterPro" id="IPR048950">
    <property type="entry name" value="Ppx_GppA_C"/>
</dbReference>
<dbReference type="InterPro" id="IPR003695">
    <property type="entry name" value="Ppx_GppA_N"/>
</dbReference>
<dbReference type="InterPro" id="IPR030673">
    <property type="entry name" value="PyroPPase_GppA_Ppx"/>
</dbReference>
<dbReference type="NCBIfam" id="NF008260">
    <property type="entry name" value="PRK11031.1"/>
    <property type="match status" value="1"/>
</dbReference>
<dbReference type="PANTHER" id="PTHR30005">
    <property type="entry name" value="EXOPOLYPHOSPHATASE"/>
    <property type="match status" value="1"/>
</dbReference>
<dbReference type="PANTHER" id="PTHR30005:SF0">
    <property type="entry name" value="RETROGRADE REGULATION PROTEIN 2"/>
    <property type="match status" value="1"/>
</dbReference>
<dbReference type="Pfam" id="PF02541">
    <property type="entry name" value="Ppx-GppA"/>
    <property type="match status" value="1"/>
</dbReference>
<dbReference type="Pfam" id="PF21447">
    <property type="entry name" value="Ppx-GppA_III"/>
    <property type="match status" value="1"/>
</dbReference>
<dbReference type="PIRSF" id="PIRSF001267">
    <property type="entry name" value="Pyrophosphatase_GppA_Ppx"/>
    <property type="match status" value="1"/>
</dbReference>
<dbReference type="SUPFAM" id="SSF53067">
    <property type="entry name" value="Actin-like ATPase domain"/>
    <property type="match status" value="2"/>
</dbReference>
<dbReference type="SUPFAM" id="SSF109604">
    <property type="entry name" value="HD-domain/PDEase-like"/>
    <property type="match status" value="1"/>
</dbReference>
<keyword id="KW-0378">Hydrolase</keyword>
<protein>
    <recommendedName>
        <fullName evidence="1">Guanosine-5'-triphosphate,3'-diphosphate pyrophosphatase</fullName>
        <ecNumber evidence="1">3.6.1.40</ecNumber>
    </recommendedName>
    <alternativeName>
        <fullName evidence="1">Guanosine pentaphosphate phosphohydrolase</fullName>
    </alternativeName>
    <alternativeName>
        <fullName evidence="1">pppGpp-5'-phosphohydrolase</fullName>
    </alternativeName>
</protein>
<evidence type="ECO:0000255" key="1">
    <source>
        <dbReference type="HAMAP-Rule" id="MF_01550"/>
    </source>
</evidence>
<comment type="function">
    <text evidence="1">Catalyzes the conversion of pppGpp to ppGpp. Guanosine pentaphosphate (pppGpp) is a cytoplasmic signaling molecule which together with ppGpp controls the 'stringent response', an adaptive process that allows bacteria to respond to amino acid starvation, resulting in the coordinated regulation of numerous cellular activities.</text>
</comment>
<comment type="catalytic activity">
    <reaction evidence="1">
        <text>guanosine 3'-diphosphate 5'-triphosphate + H2O = guanosine 3',5'-bis(diphosphate) + phosphate + H(+)</text>
        <dbReference type="Rhea" id="RHEA:13073"/>
        <dbReference type="ChEBI" id="CHEBI:15377"/>
        <dbReference type="ChEBI" id="CHEBI:15378"/>
        <dbReference type="ChEBI" id="CHEBI:43474"/>
        <dbReference type="ChEBI" id="CHEBI:77828"/>
        <dbReference type="ChEBI" id="CHEBI:142410"/>
        <dbReference type="EC" id="3.6.1.40"/>
    </reaction>
</comment>
<comment type="pathway">
    <text evidence="1">Purine metabolism; ppGpp biosynthesis; ppGpp from GTP: step 2/2.</text>
</comment>
<comment type="similarity">
    <text evidence="1">Belongs to the GppA/Ppx family. GppA subfamily.</text>
</comment>
<accession>B1X9Z3</accession>